<dbReference type="GO" id="GO:0005576">
    <property type="term" value="C:extracellular region"/>
    <property type="evidence" value="ECO:0007669"/>
    <property type="project" value="UniProtKB-SubCell"/>
</dbReference>
<dbReference type="GO" id="GO:0016020">
    <property type="term" value="C:membrane"/>
    <property type="evidence" value="ECO:0007669"/>
    <property type="project" value="UniProtKB-KW"/>
</dbReference>
<dbReference type="GO" id="GO:0044218">
    <property type="term" value="C:other organism cell membrane"/>
    <property type="evidence" value="ECO:0007669"/>
    <property type="project" value="UniProtKB-KW"/>
</dbReference>
<dbReference type="GO" id="GO:0050832">
    <property type="term" value="P:defense response to fungus"/>
    <property type="evidence" value="ECO:0000314"/>
    <property type="project" value="UniProtKB"/>
</dbReference>
<dbReference type="GO" id="GO:0050829">
    <property type="term" value="P:defense response to Gram-negative bacterium"/>
    <property type="evidence" value="ECO:0000314"/>
    <property type="project" value="UniProtKB"/>
</dbReference>
<dbReference type="GO" id="GO:0050830">
    <property type="term" value="P:defense response to Gram-positive bacterium"/>
    <property type="evidence" value="ECO:0000314"/>
    <property type="project" value="UniProtKB"/>
</dbReference>
<dbReference type="GO" id="GO:0051673">
    <property type="term" value="P:disruption of plasma membrane integrity in another organism"/>
    <property type="evidence" value="ECO:0000314"/>
    <property type="project" value="UniProtKB"/>
</dbReference>
<dbReference type="GO" id="GO:0031640">
    <property type="term" value="P:killing of cells of another organism"/>
    <property type="evidence" value="ECO:0000314"/>
    <property type="project" value="UniProtKB"/>
</dbReference>
<protein>
    <recommendedName>
        <fullName evidence="2">Panurgine R</fullName>
        <shortName evidence="2">PNG-R</shortName>
    </recommendedName>
</protein>
<keyword id="KW-0044">Antibiotic</keyword>
<keyword id="KW-0929">Antimicrobial</keyword>
<keyword id="KW-0903">Direct protein sequencing</keyword>
<keyword id="KW-1015">Disulfide bond</keyword>
<keyword id="KW-0295">Fungicide</keyword>
<keyword id="KW-0472">Membrane</keyword>
<keyword id="KW-0964">Secreted</keyword>
<keyword id="KW-1052">Target cell membrane</keyword>
<keyword id="KW-1053">Target membrane</keyword>
<feature type="peptide" id="PRO_0000444567" description="Panurgine R" evidence="1">
    <location>
        <begin position="1"/>
        <end position="25"/>
    </location>
</feature>
<feature type="disulfide bond" evidence="1">
    <location>
        <begin position="8"/>
        <end position="23"/>
    </location>
</feature>
<feature type="disulfide bond" evidence="1">
    <location>
        <begin position="11"/>
        <end position="19"/>
    </location>
</feature>
<sequence>LDVKKIICVACKIRPNPACKKICPK</sequence>
<accession>C0HL86</accession>
<evidence type="ECO:0000269" key="1">
    <source>
    </source>
</evidence>
<evidence type="ECO:0000303" key="2">
    <source>
    </source>
</evidence>
<evidence type="ECO:0000305" key="3"/>
<evidence type="ECO:0000305" key="4">
    <source>
    </source>
</evidence>
<name>PNGR_PANCL</name>
<comment type="function">
    <text evidence="1">Antimicrobial peptide active against Gram-positive bacteria M.luteus (MIC=0.8 uM) and B.subtilis (MIC=1.5 uM). Less active against Gram-negative bacteria E.coli (MIC=32.5 uM) and yeast C.albicans (MIC=18.7 uM). Not active against S.aureus and P.aeruginosa. Has no hemolytic activity against human erythrocytes. Probably acts by disrupting membranes of target cells.</text>
</comment>
<comment type="subcellular location">
    <subcellularLocation>
        <location evidence="4">Target cell membrane</location>
    </subcellularLocation>
    <subcellularLocation>
        <location evidence="1">Secreted</location>
    </subcellularLocation>
</comment>
<comment type="mass spectrometry"/>
<organism evidence="2">
    <name type="scientific">Panurgus calcaratus</name>
    <name type="common">Solitary bee</name>
    <dbReference type="NCBI Taxonomy" id="156354"/>
    <lineage>
        <taxon>Eukaryota</taxon>
        <taxon>Metazoa</taxon>
        <taxon>Ecdysozoa</taxon>
        <taxon>Arthropoda</taxon>
        <taxon>Hexapoda</taxon>
        <taxon>Insecta</taxon>
        <taxon>Pterygota</taxon>
        <taxon>Neoptera</taxon>
        <taxon>Endopterygota</taxon>
        <taxon>Hymenoptera</taxon>
        <taxon>Apocrita</taxon>
        <taxon>Aculeata</taxon>
        <taxon>Apoidea</taxon>
        <taxon>Anthophila</taxon>
        <taxon>Andrenidae</taxon>
        <taxon>Panurginae</taxon>
        <taxon>Panurgini</taxon>
        <taxon>Panurgus</taxon>
    </lineage>
</organism>
<proteinExistence type="evidence at protein level"/>
<reference evidence="3" key="1">
    <citation type="journal article" date="2013" name="Amino Acids">
        <title>Panurgines, novel antimicrobial peptides from the venom of communal bee Panurgus calcaratus (Hymenoptera: Andrenidae).</title>
        <authorList>
            <person name="Cujova S."/>
            <person name="Slaninova J."/>
            <person name="Monincova L."/>
            <person name="Fucik V."/>
            <person name="Bednarova L."/>
            <person name="Stokrova J."/>
            <person name="Hovorka O."/>
            <person name="Voburka Z."/>
            <person name="Straka J."/>
            <person name="Cerovsky V."/>
        </authorList>
    </citation>
    <scope>PROTEIN SEQUENCE</scope>
    <scope>FUNCTION</scope>
    <scope>MASS SPECTROMETRY</scope>
    <scope>DISULFIDE BONDS</scope>
    <source>
        <tissue evidence="2">Venom</tissue>
    </source>
</reference>